<evidence type="ECO:0000255" key="1">
    <source>
        <dbReference type="HAMAP-Rule" id="MF_00101"/>
    </source>
</evidence>
<proteinExistence type="inferred from homology"/>
<comment type="function">
    <text evidence="1">Transfers the 4'-phosphopantetheine moiety from coenzyme A to a Ser of acyl-carrier-protein.</text>
</comment>
<comment type="catalytic activity">
    <reaction evidence="1">
        <text>apo-[ACP] + CoA = holo-[ACP] + adenosine 3',5'-bisphosphate + H(+)</text>
        <dbReference type="Rhea" id="RHEA:12068"/>
        <dbReference type="Rhea" id="RHEA-COMP:9685"/>
        <dbReference type="Rhea" id="RHEA-COMP:9690"/>
        <dbReference type="ChEBI" id="CHEBI:15378"/>
        <dbReference type="ChEBI" id="CHEBI:29999"/>
        <dbReference type="ChEBI" id="CHEBI:57287"/>
        <dbReference type="ChEBI" id="CHEBI:58343"/>
        <dbReference type="ChEBI" id="CHEBI:64479"/>
        <dbReference type="EC" id="2.7.8.7"/>
    </reaction>
</comment>
<comment type="cofactor">
    <cofactor evidence="1">
        <name>Mg(2+)</name>
        <dbReference type="ChEBI" id="CHEBI:18420"/>
    </cofactor>
</comment>
<comment type="subcellular location">
    <subcellularLocation>
        <location evidence="1">Cytoplasm</location>
    </subcellularLocation>
</comment>
<comment type="similarity">
    <text evidence="1">Belongs to the P-Pant transferase superfamily. AcpS family.</text>
</comment>
<dbReference type="EC" id="2.7.8.7" evidence="1"/>
<dbReference type="EMBL" id="BA000016">
    <property type="protein sequence ID" value="BAB79997.1"/>
    <property type="molecule type" value="Genomic_DNA"/>
</dbReference>
<dbReference type="RefSeq" id="WP_011009717.1">
    <property type="nucleotide sequence ID" value="NC_003366.1"/>
</dbReference>
<dbReference type="SMR" id="Q8XNP1"/>
<dbReference type="STRING" id="195102.gene:10489547"/>
<dbReference type="KEGG" id="cpe:CPE0291"/>
<dbReference type="HOGENOM" id="CLU_089696_0_2_9"/>
<dbReference type="Proteomes" id="UP000000818">
    <property type="component" value="Chromosome"/>
</dbReference>
<dbReference type="GO" id="GO:0005737">
    <property type="term" value="C:cytoplasm"/>
    <property type="evidence" value="ECO:0007669"/>
    <property type="project" value="UniProtKB-SubCell"/>
</dbReference>
<dbReference type="GO" id="GO:0008897">
    <property type="term" value="F:holo-[acyl-carrier-protein] synthase activity"/>
    <property type="evidence" value="ECO:0007669"/>
    <property type="project" value="UniProtKB-UniRule"/>
</dbReference>
<dbReference type="GO" id="GO:0000287">
    <property type="term" value="F:magnesium ion binding"/>
    <property type="evidence" value="ECO:0007669"/>
    <property type="project" value="UniProtKB-UniRule"/>
</dbReference>
<dbReference type="GO" id="GO:0006633">
    <property type="term" value="P:fatty acid biosynthetic process"/>
    <property type="evidence" value="ECO:0007669"/>
    <property type="project" value="UniProtKB-UniRule"/>
</dbReference>
<dbReference type="Gene3D" id="3.90.470.20">
    <property type="entry name" value="4'-phosphopantetheinyl transferase domain"/>
    <property type="match status" value="1"/>
</dbReference>
<dbReference type="HAMAP" id="MF_00101">
    <property type="entry name" value="AcpS"/>
    <property type="match status" value="1"/>
</dbReference>
<dbReference type="InterPro" id="IPR008278">
    <property type="entry name" value="4-PPantetheinyl_Trfase_dom"/>
</dbReference>
<dbReference type="InterPro" id="IPR037143">
    <property type="entry name" value="4-PPantetheinyl_Trfase_dom_sf"/>
</dbReference>
<dbReference type="InterPro" id="IPR002582">
    <property type="entry name" value="ACPS"/>
</dbReference>
<dbReference type="InterPro" id="IPR004568">
    <property type="entry name" value="Ppantetheine-prot_Trfase_dom"/>
</dbReference>
<dbReference type="NCBIfam" id="TIGR00516">
    <property type="entry name" value="acpS"/>
    <property type="match status" value="1"/>
</dbReference>
<dbReference type="NCBIfam" id="TIGR00556">
    <property type="entry name" value="pantethn_trn"/>
    <property type="match status" value="1"/>
</dbReference>
<dbReference type="Pfam" id="PF01648">
    <property type="entry name" value="ACPS"/>
    <property type="match status" value="1"/>
</dbReference>
<dbReference type="SUPFAM" id="SSF56214">
    <property type="entry name" value="4'-phosphopantetheinyl transferase"/>
    <property type="match status" value="1"/>
</dbReference>
<organism>
    <name type="scientific">Clostridium perfringens (strain 13 / Type A)</name>
    <dbReference type="NCBI Taxonomy" id="195102"/>
    <lineage>
        <taxon>Bacteria</taxon>
        <taxon>Bacillati</taxon>
        <taxon>Bacillota</taxon>
        <taxon>Clostridia</taxon>
        <taxon>Eubacteriales</taxon>
        <taxon>Clostridiaceae</taxon>
        <taxon>Clostridium</taxon>
    </lineage>
</organism>
<protein>
    <recommendedName>
        <fullName evidence="1">Holo-[acyl-carrier-protein] synthase</fullName>
        <shortName evidence="1">Holo-ACP synthase</shortName>
        <ecNumber evidence="1">2.7.8.7</ecNumber>
    </recommendedName>
    <alternativeName>
        <fullName evidence="1">4'-phosphopantetheinyl transferase AcpS</fullName>
    </alternativeName>
</protein>
<gene>
    <name evidence="1" type="primary">acpS</name>
    <name type="ordered locus">CPE0291</name>
</gene>
<accession>Q8XNP1</accession>
<name>ACPS_CLOPE</name>
<keyword id="KW-0963">Cytoplasm</keyword>
<keyword id="KW-0275">Fatty acid biosynthesis</keyword>
<keyword id="KW-0276">Fatty acid metabolism</keyword>
<keyword id="KW-0444">Lipid biosynthesis</keyword>
<keyword id="KW-0443">Lipid metabolism</keyword>
<keyword id="KW-0460">Magnesium</keyword>
<keyword id="KW-0479">Metal-binding</keyword>
<keyword id="KW-1185">Reference proteome</keyword>
<keyword id="KW-0808">Transferase</keyword>
<sequence>MIIGIGVDIIEIERVRQAIQNNKNFLSKLFTERELDYFISRNMNSEVIAGNFAAKEAVSKALGTGIRGFSFKDIEILRNELGKPEVILHNGANLIGNKLVGNNNSLRVHLSISHNNSSAIAYSVLEGEYYGNM</sequence>
<feature type="chain" id="PRO_0000175637" description="Holo-[acyl-carrier-protein] synthase">
    <location>
        <begin position="1"/>
        <end position="133"/>
    </location>
</feature>
<feature type="binding site" evidence="1">
    <location>
        <position position="8"/>
    </location>
    <ligand>
        <name>Mg(2+)</name>
        <dbReference type="ChEBI" id="CHEBI:18420"/>
    </ligand>
</feature>
<feature type="binding site" evidence="1">
    <location>
        <position position="56"/>
    </location>
    <ligand>
        <name>Mg(2+)</name>
        <dbReference type="ChEBI" id="CHEBI:18420"/>
    </ligand>
</feature>
<reference key="1">
    <citation type="journal article" date="2002" name="Proc. Natl. Acad. Sci. U.S.A.">
        <title>Complete genome sequence of Clostridium perfringens, an anaerobic flesh-eater.</title>
        <authorList>
            <person name="Shimizu T."/>
            <person name="Ohtani K."/>
            <person name="Hirakawa H."/>
            <person name="Ohshima K."/>
            <person name="Yamashita A."/>
            <person name="Shiba T."/>
            <person name="Ogasawara N."/>
            <person name="Hattori M."/>
            <person name="Kuhara S."/>
            <person name="Hayashi H."/>
        </authorList>
    </citation>
    <scope>NUCLEOTIDE SEQUENCE [LARGE SCALE GENOMIC DNA]</scope>
    <source>
        <strain>13 / Type A</strain>
    </source>
</reference>